<comment type="function">
    <text evidence="1">Catalyzes the hydrolysis of N(2)-succinylarginine into N(2)-succinylornithine, ammonia and CO(2).</text>
</comment>
<comment type="catalytic activity">
    <reaction evidence="1">
        <text>N(2)-succinyl-L-arginine + 2 H2O + 2 H(+) = N(2)-succinyl-L-ornithine + 2 NH4(+) + CO2</text>
        <dbReference type="Rhea" id="RHEA:19533"/>
        <dbReference type="ChEBI" id="CHEBI:15377"/>
        <dbReference type="ChEBI" id="CHEBI:15378"/>
        <dbReference type="ChEBI" id="CHEBI:16526"/>
        <dbReference type="ChEBI" id="CHEBI:28938"/>
        <dbReference type="ChEBI" id="CHEBI:58241"/>
        <dbReference type="ChEBI" id="CHEBI:58514"/>
        <dbReference type="EC" id="3.5.3.23"/>
    </reaction>
</comment>
<comment type="pathway">
    <text evidence="1">Amino-acid degradation; L-arginine degradation via AST pathway; L-glutamate and succinate from L-arginine: step 2/5.</text>
</comment>
<comment type="subunit">
    <text evidence="1">Homodimer.</text>
</comment>
<comment type="similarity">
    <text evidence="1">Belongs to the succinylarginine dihydrolase family.</text>
</comment>
<proteinExistence type="inferred from homology"/>
<organism>
    <name type="scientific">Burkholderia cenocepacia (strain HI2424)</name>
    <dbReference type="NCBI Taxonomy" id="331272"/>
    <lineage>
        <taxon>Bacteria</taxon>
        <taxon>Pseudomonadati</taxon>
        <taxon>Pseudomonadota</taxon>
        <taxon>Betaproteobacteria</taxon>
        <taxon>Burkholderiales</taxon>
        <taxon>Burkholderiaceae</taxon>
        <taxon>Burkholderia</taxon>
        <taxon>Burkholderia cepacia complex</taxon>
    </lineage>
</organism>
<gene>
    <name evidence="1" type="primary">astB</name>
    <name type="ordered locus">Bcen2424_1184</name>
</gene>
<evidence type="ECO:0000255" key="1">
    <source>
        <dbReference type="HAMAP-Rule" id="MF_01172"/>
    </source>
</evidence>
<dbReference type="EC" id="3.5.3.23" evidence="1"/>
<dbReference type="EMBL" id="CP000458">
    <property type="protein sequence ID" value="ABK07936.1"/>
    <property type="molecule type" value="Genomic_DNA"/>
</dbReference>
<dbReference type="RefSeq" id="WP_011544989.1">
    <property type="nucleotide sequence ID" value="NC_008542.1"/>
</dbReference>
<dbReference type="SMR" id="A0K609"/>
<dbReference type="KEGG" id="bch:Bcen2424_1184"/>
<dbReference type="HOGENOM" id="CLU_053835_0_0_4"/>
<dbReference type="UniPathway" id="UPA00185">
    <property type="reaction ID" value="UER00280"/>
</dbReference>
<dbReference type="GO" id="GO:0009015">
    <property type="term" value="F:N-succinylarginine dihydrolase activity"/>
    <property type="evidence" value="ECO:0007669"/>
    <property type="project" value="UniProtKB-UniRule"/>
</dbReference>
<dbReference type="GO" id="GO:0019544">
    <property type="term" value="P:arginine catabolic process to glutamate"/>
    <property type="evidence" value="ECO:0007669"/>
    <property type="project" value="UniProtKB-UniRule"/>
</dbReference>
<dbReference type="GO" id="GO:0019545">
    <property type="term" value="P:arginine catabolic process to succinate"/>
    <property type="evidence" value="ECO:0007669"/>
    <property type="project" value="UniProtKB-UniRule"/>
</dbReference>
<dbReference type="Gene3D" id="3.75.10.20">
    <property type="entry name" value="Succinylarginine dihydrolase"/>
    <property type="match status" value="1"/>
</dbReference>
<dbReference type="HAMAP" id="MF_01172">
    <property type="entry name" value="AstB"/>
    <property type="match status" value="1"/>
</dbReference>
<dbReference type="InterPro" id="IPR037031">
    <property type="entry name" value="AstB_sf"/>
</dbReference>
<dbReference type="InterPro" id="IPR007079">
    <property type="entry name" value="SuccinylArg_d-Hdrlase_AstB"/>
</dbReference>
<dbReference type="NCBIfam" id="TIGR03241">
    <property type="entry name" value="arg_catab_astB"/>
    <property type="match status" value="1"/>
</dbReference>
<dbReference type="NCBIfam" id="NF009789">
    <property type="entry name" value="PRK13281.1"/>
    <property type="match status" value="1"/>
</dbReference>
<dbReference type="PANTHER" id="PTHR30420">
    <property type="entry name" value="N-SUCCINYLARGININE DIHYDROLASE"/>
    <property type="match status" value="1"/>
</dbReference>
<dbReference type="PANTHER" id="PTHR30420:SF2">
    <property type="entry name" value="N-SUCCINYLARGININE DIHYDROLASE"/>
    <property type="match status" value="1"/>
</dbReference>
<dbReference type="Pfam" id="PF04996">
    <property type="entry name" value="AstB"/>
    <property type="match status" value="1"/>
</dbReference>
<dbReference type="SUPFAM" id="SSF55909">
    <property type="entry name" value="Pentein"/>
    <property type="match status" value="1"/>
</dbReference>
<name>ASTB_BURCH</name>
<keyword id="KW-0056">Arginine metabolism</keyword>
<keyword id="KW-0378">Hydrolase</keyword>
<accession>A0K609</accession>
<reference key="1">
    <citation type="submission" date="2006-08" db="EMBL/GenBank/DDBJ databases">
        <title>Complete sequence of chromosome 1 of Burkholderia cenocepacia HI2424.</title>
        <authorList>
            <person name="Copeland A."/>
            <person name="Lucas S."/>
            <person name="Lapidus A."/>
            <person name="Barry K."/>
            <person name="Detter J.C."/>
            <person name="Glavina del Rio T."/>
            <person name="Hammon N."/>
            <person name="Israni S."/>
            <person name="Pitluck S."/>
            <person name="Chain P."/>
            <person name="Malfatti S."/>
            <person name="Shin M."/>
            <person name="Vergez L."/>
            <person name="Schmutz J."/>
            <person name="Larimer F."/>
            <person name="Land M."/>
            <person name="Hauser L."/>
            <person name="Kyrpides N."/>
            <person name="Kim E."/>
            <person name="LiPuma J.J."/>
            <person name="Gonzalez C.F."/>
            <person name="Konstantinidis K."/>
            <person name="Tiedje J.M."/>
            <person name="Richardson P."/>
        </authorList>
    </citation>
    <scope>NUCLEOTIDE SEQUENCE [LARGE SCALE GENOMIC DNA]</scope>
    <source>
        <strain>HI2424</strain>
    </source>
</reference>
<feature type="chain" id="PRO_1000065714" description="N-succinylarginine dihydrolase">
    <location>
        <begin position="1"/>
        <end position="446"/>
    </location>
</feature>
<feature type="active site" evidence="1">
    <location>
        <position position="174"/>
    </location>
</feature>
<feature type="active site" evidence="1">
    <location>
        <position position="249"/>
    </location>
</feature>
<feature type="active site" description="Nucleophile" evidence="1">
    <location>
        <position position="370"/>
    </location>
</feature>
<feature type="binding site" evidence="1">
    <location>
        <begin position="19"/>
        <end position="28"/>
    </location>
    <ligand>
        <name>substrate</name>
    </ligand>
</feature>
<feature type="binding site" evidence="1">
    <location>
        <position position="110"/>
    </location>
    <ligand>
        <name>substrate</name>
    </ligand>
</feature>
<feature type="binding site" evidence="1">
    <location>
        <begin position="137"/>
        <end position="138"/>
    </location>
    <ligand>
        <name>substrate</name>
    </ligand>
</feature>
<feature type="binding site" evidence="1">
    <location>
        <position position="213"/>
    </location>
    <ligand>
        <name>substrate</name>
    </ligand>
</feature>
<feature type="binding site" evidence="1">
    <location>
        <position position="251"/>
    </location>
    <ligand>
        <name>substrate</name>
    </ligand>
</feature>
<feature type="binding site" evidence="1">
    <location>
        <position position="364"/>
    </location>
    <ligand>
        <name>substrate</name>
    </ligand>
</feature>
<sequence length="446" mass="48327">MNAQEANFDGLVGPTHNYAGLSFGNVASLNNEKSAANPKAAAKQGLRKMKQLADLGFAQGVLPPQERPSLRLLRELGFSGKDADVIAKAAKQAPELLAAASSASAMWTANAATVSPSADTSDGRVHFTPANLCSKLHRAIEHEATRRTLSTLFADPTHFAVHEALTGTPALGDEGAANHTRFCAEYGKPGIEFFVYGRAEYRRGPEPKRFPARQTFEASRAVAHRHGLAEEATVYAQQDPDVIDAGVFHNDVISVGNRDTLFTHERAFVNKQAIYDTLTAALDARGARLNVIEVPDAAVSVNDAVTSYLFNSQLLSRADGSQVLVVPQECRENARVAAYLDQLAAGNGPIHDVLVFDLRESMKNGGGPACLRLRVVLNDAERAAVTSNVWINDTLFASLDAWIDKHYRDRLAPEDLADPALLDESRTALDELTQILRVGSLYDFQR</sequence>
<protein>
    <recommendedName>
        <fullName evidence="1">N-succinylarginine dihydrolase</fullName>
        <ecNumber evidence="1">3.5.3.23</ecNumber>
    </recommendedName>
</protein>